<sequence>MAQVIKRKPTSPGRRFVVSIVDKELHKGTSYGPLTQNKNRINGRNNAGRITMRHKGGGHKRRYRIIDFKRNKDDITARVERLEYDPNRSANIALILYADGKRHYIIAPRGLSVGDMIVSGNSVAIQVGNVMPLSNIPLGSIVHCIELRPMKGAQIARSAGTSAQLIAKRGTYVTLRLRSGEVRKVLTDCRATIGEVSRSEHSLRKLGKAGATRWHGVRPTVRGVVMNSVDHPHGGGEGKTSGGRHPVSPWGTPTKGYKTRSNKRTDKLILRHRNKG</sequence>
<name>RL2_VESOH</name>
<comment type="function">
    <text evidence="1">One of the primary rRNA binding proteins. Required for association of the 30S and 50S subunits to form the 70S ribosome, for tRNA binding and peptide bond formation. It has been suggested to have peptidyltransferase activity; this is somewhat controversial. Makes several contacts with the 16S rRNA in the 70S ribosome.</text>
</comment>
<comment type="subunit">
    <text evidence="1">Part of the 50S ribosomal subunit. Forms a bridge to the 30S subunit in the 70S ribosome.</text>
</comment>
<comment type="similarity">
    <text evidence="1">Belongs to the universal ribosomal protein uL2 family.</text>
</comment>
<dbReference type="EMBL" id="AP009247">
    <property type="protein sequence ID" value="BAF61302.1"/>
    <property type="molecule type" value="Genomic_DNA"/>
</dbReference>
<dbReference type="RefSeq" id="WP_011929572.1">
    <property type="nucleotide sequence ID" value="NC_009465.1"/>
</dbReference>
<dbReference type="SMR" id="A5CXK7"/>
<dbReference type="STRING" id="412965.COSY_0172"/>
<dbReference type="KEGG" id="vok:COSY_0172"/>
<dbReference type="eggNOG" id="COG0090">
    <property type="taxonomic scope" value="Bacteria"/>
</dbReference>
<dbReference type="HOGENOM" id="CLU_036235_2_1_6"/>
<dbReference type="OrthoDB" id="9778722at2"/>
<dbReference type="Proteomes" id="UP000000247">
    <property type="component" value="Chromosome"/>
</dbReference>
<dbReference type="GO" id="GO:0015934">
    <property type="term" value="C:large ribosomal subunit"/>
    <property type="evidence" value="ECO:0007669"/>
    <property type="project" value="InterPro"/>
</dbReference>
<dbReference type="GO" id="GO:0019843">
    <property type="term" value="F:rRNA binding"/>
    <property type="evidence" value="ECO:0007669"/>
    <property type="project" value="UniProtKB-UniRule"/>
</dbReference>
<dbReference type="GO" id="GO:0003735">
    <property type="term" value="F:structural constituent of ribosome"/>
    <property type="evidence" value="ECO:0007669"/>
    <property type="project" value="InterPro"/>
</dbReference>
<dbReference type="GO" id="GO:0016740">
    <property type="term" value="F:transferase activity"/>
    <property type="evidence" value="ECO:0007669"/>
    <property type="project" value="InterPro"/>
</dbReference>
<dbReference type="GO" id="GO:0002181">
    <property type="term" value="P:cytoplasmic translation"/>
    <property type="evidence" value="ECO:0007669"/>
    <property type="project" value="TreeGrafter"/>
</dbReference>
<dbReference type="FunFam" id="2.30.30.30:FF:000001">
    <property type="entry name" value="50S ribosomal protein L2"/>
    <property type="match status" value="1"/>
</dbReference>
<dbReference type="FunFam" id="2.40.50.140:FF:000003">
    <property type="entry name" value="50S ribosomal protein L2"/>
    <property type="match status" value="1"/>
</dbReference>
<dbReference type="FunFam" id="4.10.950.10:FF:000001">
    <property type="entry name" value="50S ribosomal protein L2"/>
    <property type="match status" value="1"/>
</dbReference>
<dbReference type="Gene3D" id="2.30.30.30">
    <property type="match status" value="1"/>
</dbReference>
<dbReference type="Gene3D" id="2.40.50.140">
    <property type="entry name" value="Nucleic acid-binding proteins"/>
    <property type="match status" value="1"/>
</dbReference>
<dbReference type="Gene3D" id="4.10.950.10">
    <property type="entry name" value="Ribosomal protein L2, domain 3"/>
    <property type="match status" value="1"/>
</dbReference>
<dbReference type="HAMAP" id="MF_01320_B">
    <property type="entry name" value="Ribosomal_uL2_B"/>
    <property type="match status" value="1"/>
</dbReference>
<dbReference type="InterPro" id="IPR012340">
    <property type="entry name" value="NA-bd_OB-fold"/>
</dbReference>
<dbReference type="InterPro" id="IPR014722">
    <property type="entry name" value="Rib_uL2_dom2"/>
</dbReference>
<dbReference type="InterPro" id="IPR002171">
    <property type="entry name" value="Ribosomal_uL2"/>
</dbReference>
<dbReference type="InterPro" id="IPR005880">
    <property type="entry name" value="Ribosomal_uL2_bac/org-type"/>
</dbReference>
<dbReference type="InterPro" id="IPR022669">
    <property type="entry name" value="Ribosomal_uL2_C"/>
</dbReference>
<dbReference type="InterPro" id="IPR014726">
    <property type="entry name" value="Ribosomal_uL2_dom3"/>
</dbReference>
<dbReference type="InterPro" id="IPR022666">
    <property type="entry name" value="Ribosomal_uL2_RNA-bd_dom"/>
</dbReference>
<dbReference type="InterPro" id="IPR008991">
    <property type="entry name" value="Translation_prot_SH3-like_sf"/>
</dbReference>
<dbReference type="NCBIfam" id="TIGR01171">
    <property type="entry name" value="rplB_bact"/>
    <property type="match status" value="1"/>
</dbReference>
<dbReference type="PANTHER" id="PTHR13691:SF5">
    <property type="entry name" value="LARGE RIBOSOMAL SUBUNIT PROTEIN UL2M"/>
    <property type="match status" value="1"/>
</dbReference>
<dbReference type="PANTHER" id="PTHR13691">
    <property type="entry name" value="RIBOSOMAL PROTEIN L2"/>
    <property type="match status" value="1"/>
</dbReference>
<dbReference type="Pfam" id="PF00181">
    <property type="entry name" value="Ribosomal_L2"/>
    <property type="match status" value="1"/>
</dbReference>
<dbReference type="Pfam" id="PF03947">
    <property type="entry name" value="Ribosomal_L2_C"/>
    <property type="match status" value="1"/>
</dbReference>
<dbReference type="PIRSF" id="PIRSF002158">
    <property type="entry name" value="Ribosomal_L2"/>
    <property type="match status" value="1"/>
</dbReference>
<dbReference type="SMART" id="SM01383">
    <property type="entry name" value="Ribosomal_L2"/>
    <property type="match status" value="1"/>
</dbReference>
<dbReference type="SMART" id="SM01382">
    <property type="entry name" value="Ribosomal_L2_C"/>
    <property type="match status" value="1"/>
</dbReference>
<dbReference type="SUPFAM" id="SSF50249">
    <property type="entry name" value="Nucleic acid-binding proteins"/>
    <property type="match status" value="1"/>
</dbReference>
<dbReference type="SUPFAM" id="SSF50104">
    <property type="entry name" value="Translation proteins SH3-like domain"/>
    <property type="match status" value="1"/>
</dbReference>
<accession>A5CXK7</accession>
<keyword id="KW-1185">Reference proteome</keyword>
<keyword id="KW-0687">Ribonucleoprotein</keyword>
<keyword id="KW-0689">Ribosomal protein</keyword>
<keyword id="KW-0694">RNA-binding</keyword>
<keyword id="KW-0699">rRNA-binding</keyword>
<gene>
    <name evidence="1" type="primary">rplB</name>
    <name type="ordered locus">COSY_0172</name>
</gene>
<protein>
    <recommendedName>
        <fullName evidence="1">Large ribosomal subunit protein uL2</fullName>
    </recommendedName>
    <alternativeName>
        <fullName evidence="3">50S ribosomal protein L2</fullName>
    </alternativeName>
</protein>
<evidence type="ECO:0000255" key="1">
    <source>
        <dbReference type="HAMAP-Rule" id="MF_01320"/>
    </source>
</evidence>
<evidence type="ECO:0000256" key="2">
    <source>
        <dbReference type="SAM" id="MobiDB-lite"/>
    </source>
</evidence>
<evidence type="ECO:0000305" key="3"/>
<reference key="1">
    <citation type="journal article" date="2007" name="Curr. Biol.">
        <title>Reduced genome of the thioautotrophic intracellular symbiont in a deep-sea clam, Calyptogena okutanii.</title>
        <authorList>
            <person name="Kuwahara H."/>
            <person name="Yoshida T."/>
            <person name="Takaki Y."/>
            <person name="Shimamura S."/>
            <person name="Nishi S."/>
            <person name="Harada M."/>
            <person name="Matsuyama K."/>
            <person name="Takishita K."/>
            <person name="Kawato M."/>
            <person name="Uematsu K."/>
            <person name="Fujiwara Y."/>
            <person name="Sato T."/>
            <person name="Kato C."/>
            <person name="Kitagawa M."/>
            <person name="Kato I."/>
            <person name="Maruyama T."/>
        </authorList>
    </citation>
    <scope>NUCLEOTIDE SEQUENCE [LARGE SCALE GENOMIC DNA]</scope>
    <source>
        <strain>HA</strain>
    </source>
</reference>
<organism>
    <name type="scientific">Vesicomyosocius okutanii subsp. Calyptogena okutanii (strain HA)</name>
    <dbReference type="NCBI Taxonomy" id="412965"/>
    <lineage>
        <taxon>Bacteria</taxon>
        <taxon>Pseudomonadati</taxon>
        <taxon>Pseudomonadota</taxon>
        <taxon>Gammaproteobacteria</taxon>
        <taxon>Candidatus Pseudothioglobaceae</taxon>
        <taxon>Candidatus Vesicomyosocius</taxon>
    </lineage>
</organism>
<feature type="chain" id="PRO_0000310038" description="Large ribosomal subunit protein uL2">
    <location>
        <begin position="1"/>
        <end position="276"/>
    </location>
</feature>
<feature type="region of interest" description="Disordered" evidence="2">
    <location>
        <begin position="226"/>
        <end position="276"/>
    </location>
</feature>
<proteinExistence type="inferred from homology"/>